<name>CH60_STAHJ</name>
<keyword id="KW-0067">ATP-binding</keyword>
<keyword id="KW-0143">Chaperone</keyword>
<keyword id="KW-0963">Cytoplasm</keyword>
<keyword id="KW-0413">Isomerase</keyword>
<keyword id="KW-0547">Nucleotide-binding</keyword>
<sequence length="539" mass="57470">MAKDLKFSEDARQAMLRGVDKLANAVKVTIGPKGRNVVLDKEYVAPLITNDGVTIAKEIELEDPYENMGAKLVQEVANKTNEIAGDGTTTATVLAQAMIQEGLKNVTSGANPVGLREGIDKAVRVAVQALHDISQKVENKNEIAQVGAISAADEEIGKYISEAMDKVGNDGVITIEESNGLDTELEVVEGMQFDRGYQSPYMVTDSDKMIAELERPYILVTDKKISSFQDILPLLEQVVQSSRPILIVADEVEGDALTNIVLNRMRGTFTAVAVKAPGFGDRRKAMLEDLAILTGATVITDDLGLELKDASIDMLGSANKVEVTKDNTTVVDGDGDDNSIDARVSQIKAQIEETDSDFDREKLQERLAKLAGGVAVIKVGAASETELKERKLRIEDALNSTRAAVEEGIVAGGGTALVNIYNKVDEIEAEGDVATGVNIVLKALSAPVRQIAENAGLEGSVIVERLKHADAGVGFNAATNEWVNMLEEGIVDPTKVTRSALQHAASVAAMFLTTEAVVATIPEPDNNDNPGMGGMPGMM</sequence>
<reference key="1">
    <citation type="journal article" date="2005" name="J. Bacteriol.">
        <title>Whole-genome sequencing of Staphylococcus haemolyticus uncovers the extreme plasticity of its genome and the evolution of human-colonizing staphylococcal species.</title>
        <authorList>
            <person name="Takeuchi F."/>
            <person name="Watanabe S."/>
            <person name="Baba T."/>
            <person name="Yuzawa H."/>
            <person name="Ito T."/>
            <person name="Morimoto Y."/>
            <person name="Kuroda M."/>
            <person name="Cui L."/>
            <person name="Takahashi M."/>
            <person name="Ankai A."/>
            <person name="Baba S."/>
            <person name="Fukui S."/>
            <person name="Lee J.C."/>
            <person name="Hiramatsu K."/>
        </authorList>
    </citation>
    <scope>NUCLEOTIDE SEQUENCE [LARGE SCALE GENOMIC DNA]</scope>
    <source>
        <strain>JCSC1435</strain>
    </source>
</reference>
<gene>
    <name evidence="1" type="primary">groEL</name>
    <name evidence="1" type="synonym">groL</name>
    <name type="ordered locus">SH1002</name>
</gene>
<comment type="function">
    <text evidence="1">Together with its co-chaperonin GroES, plays an essential role in assisting protein folding. The GroEL-GroES system forms a nano-cage that allows encapsulation of the non-native substrate proteins and provides a physical environment optimized to promote and accelerate protein folding.</text>
</comment>
<comment type="catalytic activity">
    <reaction evidence="1">
        <text>ATP + H2O + a folded polypeptide = ADP + phosphate + an unfolded polypeptide.</text>
        <dbReference type="EC" id="5.6.1.7"/>
    </reaction>
</comment>
<comment type="subunit">
    <text evidence="1">Forms a cylinder of 14 subunits composed of two heptameric rings stacked back-to-back. Interacts with the co-chaperonin GroES.</text>
</comment>
<comment type="subcellular location">
    <subcellularLocation>
        <location evidence="1">Cytoplasm</location>
    </subcellularLocation>
</comment>
<comment type="similarity">
    <text evidence="1">Belongs to the chaperonin (HSP60) family.</text>
</comment>
<accession>Q4L7R4</accession>
<feature type="chain" id="PRO_0000256994" description="Chaperonin GroEL">
    <location>
        <begin position="1"/>
        <end position="539"/>
    </location>
</feature>
<feature type="binding site" evidence="1">
    <location>
        <begin position="29"/>
        <end position="32"/>
    </location>
    <ligand>
        <name>ATP</name>
        <dbReference type="ChEBI" id="CHEBI:30616"/>
    </ligand>
</feature>
<feature type="binding site" evidence="1">
    <location>
        <begin position="86"/>
        <end position="90"/>
    </location>
    <ligand>
        <name>ATP</name>
        <dbReference type="ChEBI" id="CHEBI:30616"/>
    </ligand>
</feature>
<feature type="binding site" evidence="1">
    <location>
        <position position="413"/>
    </location>
    <ligand>
        <name>ATP</name>
        <dbReference type="ChEBI" id="CHEBI:30616"/>
    </ligand>
</feature>
<feature type="binding site" evidence="1">
    <location>
        <begin position="476"/>
        <end position="478"/>
    </location>
    <ligand>
        <name>ATP</name>
        <dbReference type="ChEBI" id="CHEBI:30616"/>
    </ligand>
</feature>
<feature type="binding site" evidence="1">
    <location>
        <position position="492"/>
    </location>
    <ligand>
        <name>ATP</name>
        <dbReference type="ChEBI" id="CHEBI:30616"/>
    </ligand>
</feature>
<organism>
    <name type="scientific">Staphylococcus haemolyticus (strain JCSC1435)</name>
    <dbReference type="NCBI Taxonomy" id="279808"/>
    <lineage>
        <taxon>Bacteria</taxon>
        <taxon>Bacillati</taxon>
        <taxon>Bacillota</taxon>
        <taxon>Bacilli</taxon>
        <taxon>Bacillales</taxon>
        <taxon>Staphylococcaceae</taxon>
        <taxon>Staphylococcus</taxon>
    </lineage>
</organism>
<protein>
    <recommendedName>
        <fullName evidence="1">Chaperonin GroEL</fullName>
        <ecNumber evidence="1">5.6.1.7</ecNumber>
    </recommendedName>
    <alternativeName>
        <fullName evidence="1">60 kDa chaperonin</fullName>
    </alternativeName>
    <alternativeName>
        <fullName evidence="1">Chaperonin-60</fullName>
        <shortName evidence="1">Cpn60</shortName>
    </alternativeName>
</protein>
<evidence type="ECO:0000255" key="1">
    <source>
        <dbReference type="HAMAP-Rule" id="MF_00600"/>
    </source>
</evidence>
<proteinExistence type="inferred from homology"/>
<dbReference type="EC" id="5.6.1.7" evidence="1"/>
<dbReference type="EMBL" id="AP006716">
    <property type="protein sequence ID" value="BAE04311.1"/>
    <property type="molecule type" value="Genomic_DNA"/>
</dbReference>
<dbReference type="RefSeq" id="WP_011275310.1">
    <property type="nucleotide sequence ID" value="NC_007168.1"/>
</dbReference>
<dbReference type="SMR" id="Q4L7R4"/>
<dbReference type="GeneID" id="93780394"/>
<dbReference type="KEGG" id="sha:SH1002"/>
<dbReference type="eggNOG" id="COG0459">
    <property type="taxonomic scope" value="Bacteria"/>
</dbReference>
<dbReference type="HOGENOM" id="CLU_016503_3_0_9"/>
<dbReference type="OrthoDB" id="9766614at2"/>
<dbReference type="Proteomes" id="UP000000543">
    <property type="component" value="Chromosome"/>
</dbReference>
<dbReference type="GO" id="GO:0005737">
    <property type="term" value="C:cytoplasm"/>
    <property type="evidence" value="ECO:0007669"/>
    <property type="project" value="UniProtKB-SubCell"/>
</dbReference>
<dbReference type="GO" id="GO:0005524">
    <property type="term" value="F:ATP binding"/>
    <property type="evidence" value="ECO:0007669"/>
    <property type="project" value="UniProtKB-UniRule"/>
</dbReference>
<dbReference type="GO" id="GO:0140662">
    <property type="term" value="F:ATP-dependent protein folding chaperone"/>
    <property type="evidence" value="ECO:0007669"/>
    <property type="project" value="InterPro"/>
</dbReference>
<dbReference type="GO" id="GO:0016853">
    <property type="term" value="F:isomerase activity"/>
    <property type="evidence" value="ECO:0007669"/>
    <property type="project" value="UniProtKB-KW"/>
</dbReference>
<dbReference type="GO" id="GO:0051082">
    <property type="term" value="F:unfolded protein binding"/>
    <property type="evidence" value="ECO:0007669"/>
    <property type="project" value="UniProtKB-UniRule"/>
</dbReference>
<dbReference type="GO" id="GO:0042026">
    <property type="term" value="P:protein refolding"/>
    <property type="evidence" value="ECO:0007669"/>
    <property type="project" value="UniProtKB-UniRule"/>
</dbReference>
<dbReference type="CDD" id="cd03344">
    <property type="entry name" value="GroEL"/>
    <property type="match status" value="1"/>
</dbReference>
<dbReference type="FunFam" id="3.50.7.10:FF:000001">
    <property type="entry name" value="60 kDa chaperonin"/>
    <property type="match status" value="1"/>
</dbReference>
<dbReference type="Gene3D" id="3.50.7.10">
    <property type="entry name" value="GroEL"/>
    <property type="match status" value="1"/>
</dbReference>
<dbReference type="Gene3D" id="1.10.560.10">
    <property type="entry name" value="GroEL-like equatorial domain"/>
    <property type="match status" value="1"/>
</dbReference>
<dbReference type="Gene3D" id="3.30.260.10">
    <property type="entry name" value="TCP-1-like chaperonin intermediate domain"/>
    <property type="match status" value="1"/>
</dbReference>
<dbReference type="HAMAP" id="MF_00600">
    <property type="entry name" value="CH60"/>
    <property type="match status" value="1"/>
</dbReference>
<dbReference type="InterPro" id="IPR018370">
    <property type="entry name" value="Chaperonin_Cpn60_CS"/>
</dbReference>
<dbReference type="InterPro" id="IPR001844">
    <property type="entry name" value="Cpn60/GroEL"/>
</dbReference>
<dbReference type="InterPro" id="IPR002423">
    <property type="entry name" value="Cpn60/GroEL/TCP-1"/>
</dbReference>
<dbReference type="InterPro" id="IPR027409">
    <property type="entry name" value="GroEL-like_apical_dom_sf"/>
</dbReference>
<dbReference type="InterPro" id="IPR027413">
    <property type="entry name" value="GROEL-like_equatorial_sf"/>
</dbReference>
<dbReference type="InterPro" id="IPR027410">
    <property type="entry name" value="TCP-1-like_intermed_sf"/>
</dbReference>
<dbReference type="NCBIfam" id="TIGR02348">
    <property type="entry name" value="GroEL"/>
    <property type="match status" value="1"/>
</dbReference>
<dbReference type="NCBIfam" id="NF000592">
    <property type="entry name" value="PRK00013.1"/>
    <property type="match status" value="1"/>
</dbReference>
<dbReference type="NCBIfam" id="NF009487">
    <property type="entry name" value="PRK12849.1"/>
    <property type="match status" value="1"/>
</dbReference>
<dbReference type="NCBIfam" id="NF009488">
    <property type="entry name" value="PRK12850.1"/>
    <property type="match status" value="1"/>
</dbReference>
<dbReference type="NCBIfam" id="NF009489">
    <property type="entry name" value="PRK12851.1"/>
    <property type="match status" value="1"/>
</dbReference>
<dbReference type="PANTHER" id="PTHR45633">
    <property type="entry name" value="60 KDA HEAT SHOCK PROTEIN, MITOCHONDRIAL"/>
    <property type="match status" value="1"/>
</dbReference>
<dbReference type="Pfam" id="PF00118">
    <property type="entry name" value="Cpn60_TCP1"/>
    <property type="match status" value="1"/>
</dbReference>
<dbReference type="PRINTS" id="PR00298">
    <property type="entry name" value="CHAPERONIN60"/>
</dbReference>
<dbReference type="SUPFAM" id="SSF52029">
    <property type="entry name" value="GroEL apical domain-like"/>
    <property type="match status" value="1"/>
</dbReference>
<dbReference type="SUPFAM" id="SSF48592">
    <property type="entry name" value="GroEL equatorial domain-like"/>
    <property type="match status" value="1"/>
</dbReference>
<dbReference type="SUPFAM" id="SSF54849">
    <property type="entry name" value="GroEL-intermediate domain like"/>
    <property type="match status" value="1"/>
</dbReference>
<dbReference type="PROSITE" id="PS00296">
    <property type="entry name" value="CHAPERONINS_CPN60"/>
    <property type="match status" value="1"/>
</dbReference>